<accession>Q7MT44</accession>
<name>XPT_PORGI</name>
<comment type="function">
    <text evidence="1">Converts the preformed base xanthine, a product of nucleic acid breakdown, to xanthosine 5'-monophosphate (XMP), so it can be reused for RNA or DNA synthesis.</text>
</comment>
<comment type="catalytic activity">
    <reaction evidence="1">
        <text>XMP + diphosphate = xanthine + 5-phospho-alpha-D-ribose 1-diphosphate</text>
        <dbReference type="Rhea" id="RHEA:10800"/>
        <dbReference type="ChEBI" id="CHEBI:17712"/>
        <dbReference type="ChEBI" id="CHEBI:33019"/>
        <dbReference type="ChEBI" id="CHEBI:57464"/>
        <dbReference type="ChEBI" id="CHEBI:58017"/>
        <dbReference type="EC" id="2.4.2.22"/>
    </reaction>
</comment>
<comment type="pathway">
    <text evidence="1">Purine metabolism; XMP biosynthesis via salvage pathway; XMP from xanthine: step 1/1.</text>
</comment>
<comment type="subunit">
    <text evidence="1">Homodimer.</text>
</comment>
<comment type="subcellular location">
    <subcellularLocation>
        <location evidence="1">Cytoplasm</location>
    </subcellularLocation>
</comment>
<comment type="similarity">
    <text evidence="1">Belongs to the purine/pyrimidine phosphoribosyltransferase family. Xpt subfamily.</text>
</comment>
<sequence>MELLKQRILQDGKCYPGGILKVDSFINHQMDSKLMYHVAEEFARLFADSGVNKIVTIEASGIAPAIMVGYIMNLPVVFVKKKQPKTMDNMLTTTVHSFTKSRDYTVCISHDFLTDDDRILFIDDFLAYGNAAQGIIDLAEQASAKIVGMGFIIEKAFQNGREALQERGIRVESLAIIRSLDNCCITIADENED</sequence>
<gene>
    <name evidence="1" type="primary">xpt</name>
    <name type="ordered locus">PG_2147</name>
</gene>
<evidence type="ECO:0000255" key="1">
    <source>
        <dbReference type="HAMAP-Rule" id="MF_01184"/>
    </source>
</evidence>
<organism>
    <name type="scientific">Porphyromonas gingivalis (strain ATCC BAA-308 / W83)</name>
    <dbReference type="NCBI Taxonomy" id="242619"/>
    <lineage>
        <taxon>Bacteria</taxon>
        <taxon>Pseudomonadati</taxon>
        <taxon>Bacteroidota</taxon>
        <taxon>Bacteroidia</taxon>
        <taxon>Bacteroidales</taxon>
        <taxon>Porphyromonadaceae</taxon>
        <taxon>Porphyromonas</taxon>
    </lineage>
</organism>
<reference key="1">
    <citation type="journal article" date="2003" name="J. Bacteriol.">
        <title>Complete genome sequence of the oral pathogenic bacterium Porphyromonas gingivalis strain W83.</title>
        <authorList>
            <person name="Nelson K.E."/>
            <person name="Fleischmann R.D."/>
            <person name="DeBoy R.T."/>
            <person name="Paulsen I.T."/>
            <person name="Fouts D.E."/>
            <person name="Eisen J.A."/>
            <person name="Daugherty S.C."/>
            <person name="Dodson R.J."/>
            <person name="Durkin A.S."/>
            <person name="Gwinn M.L."/>
            <person name="Haft D.H."/>
            <person name="Kolonay J.F."/>
            <person name="Nelson W.C."/>
            <person name="Mason T.M."/>
            <person name="Tallon L."/>
            <person name="Gray J."/>
            <person name="Granger D."/>
            <person name="Tettelin H."/>
            <person name="Dong H."/>
            <person name="Galvin J.L."/>
            <person name="Duncan M.J."/>
            <person name="Dewhirst F.E."/>
            <person name="Fraser C.M."/>
        </authorList>
    </citation>
    <scope>NUCLEOTIDE SEQUENCE [LARGE SCALE GENOMIC DNA]</scope>
    <source>
        <strain>ATCC BAA-308 / W83</strain>
    </source>
</reference>
<dbReference type="EC" id="2.4.2.22" evidence="1"/>
<dbReference type="EMBL" id="AE015924">
    <property type="protein sequence ID" value="AAQ67100.1"/>
    <property type="molecule type" value="Genomic_DNA"/>
</dbReference>
<dbReference type="RefSeq" id="WP_004584630.1">
    <property type="nucleotide sequence ID" value="NC_002950.2"/>
</dbReference>
<dbReference type="SMR" id="Q7MT44"/>
<dbReference type="STRING" id="242619.PG_2147"/>
<dbReference type="EnsemblBacteria" id="AAQ67100">
    <property type="protein sequence ID" value="AAQ67100"/>
    <property type="gene ID" value="PG_2147"/>
</dbReference>
<dbReference type="GeneID" id="29255440"/>
<dbReference type="KEGG" id="pgi:PG_2147"/>
<dbReference type="eggNOG" id="COG0503">
    <property type="taxonomic scope" value="Bacteria"/>
</dbReference>
<dbReference type="HOGENOM" id="CLU_099015_0_0_10"/>
<dbReference type="UniPathway" id="UPA00602">
    <property type="reaction ID" value="UER00658"/>
</dbReference>
<dbReference type="Proteomes" id="UP000000588">
    <property type="component" value="Chromosome"/>
</dbReference>
<dbReference type="GO" id="GO:0005737">
    <property type="term" value="C:cytoplasm"/>
    <property type="evidence" value="ECO:0007669"/>
    <property type="project" value="UniProtKB-SubCell"/>
</dbReference>
<dbReference type="GO" id="GO:0000310">
    <property type="term" value="F:xanthine phosphoribosyltransferase activity"/>
    <property type="evidence" value="ECO:0007669"/>
    <property type="project" value="UniProtKB-UniRule"/>
</dbReference>
<dbReference type="GO" id="GO:0006166">
    <property type="term" value="P:purine ribonucleoside salvage"/>
    <property type="evidence" value="ECO:0007669"/>
    <property type="project" value="UniProtKB-KW"/>
</dbReference>
<dbReference type="GO" id="GO:0046110">
    <property type="term" value="P:xanthine metabolic process"/>
    <property type="evidence" value="ECO:0007669"/>
    <property type="project" value="InterPro"/>
</dbReference>
<dbReference type="GO" id="GO:0032265">
    <property type="term" value="P:XMP salvage"/>
    <property type="evidence" value="ECO:0007669"/>
    <property type="project" value="UniProtKB-UniRule"/>
</dbReference>
<dbReference type="CDD" id="cd06223">
    <property type="entry name" value="PRTases_typeI"/>
    <property type="match status" value="1"/>
</dbReference>
<dbReference type="Gene3D" id="3.40.50.2020">
    <property type="match status" value="1"/>
</dbReference>
<dbReference type="HAMAP" id="MF_01184">
    <property type="entry name" value="XPRTase"/>
    <property type="match status" value="1"/>
</dbReference>
<dbReference type="InterPro" id="IPR000836">
    <property type="entry name" value="PRibTrfase_dom"/>
</dbReference>
<dbReference type="InterPro" id="IPR029057">
    <property type="entry name" value="PRTase-like"/>
</dbReference>
<dbReference type="InterPro" id="IPR050118">
    <property type="entry name" value="Pur/Pyrimidine_PRTase"/>
</dbReference>
<dbReference type="InterPro" id="IPR010079">
    <property type="entry name" value="Xanthine_PRibTrfase"/>
</dbReference>
<dbReference type="NCBIfam" id="NF006671">
    <property type="entry name" value="PRK09219.1"/>
    <property type="match status" value="1"/>
</dbReference>
<dbReference type="NCBIfam" id="TIGR01744">
    <property type="entry name" value="XPRTase"/>
    <property type="match status" value="1"/>
</dbReference>
<dbReference type="PANTHER" id="PTHR43864">
    <property type="entry name" value="HYPOXANTHINE/GUANINE PHOSPHORIBOSYLTRANSFERASE"/>
    <property type="match status" value="1"/>
</dbReference>
<dbReference type="PANTHER" id="PTHR43864:SF1">
    <property type="entry name" value="XANTHINE PHOSPHORIBOSYLTRANSFERASE"/>
    <property type="match status" value="1"/>
</dbReference>
<dbReference type="SUPFAM" id="SSF53271">
    <property type="entry name" value="PRTase-like"/>
    <property type="match status" value="1"/>
</dbReference>
<keyword id="KW-0963">Cytoplasm</keyword>
<keyword id="KW-0328">Glycosyltransferase</keyword>
<keyword id="KW-0660">Purine salvage</keyword>
<keyword id="KW-1185">Reference proteome</keyword>
<keyword id="KW-0808">Transferase</keyword>
<proteinExistence type="inferred from homology"/>
<protein>
    <recommendedName>
        <fullName evidence="1">Xanthine phosphoribosyltransferase</fullName>
        <shortName evidence="1">XPRTase</shortName>
        <ecNumber evidence="1">2.4.2.22</ecNumber>
    </recommendedName>
</protein>
<feature type="chain" id="PRO_0000339726" description="Xanthine phosphoribosyltransferase">
    <location>
        <begin position="1"/>
        <end position="193"/>
    </location>
</feature>
<feature type="binding site" evidence="1">
    <location>
        <position position="20"/>
    </location>
    <ligand>
        <name>xanthine</name>
        <dbReference type="ChEBI" id="CHEBI:17712"/>
    </ligand>
</feature>
<feature type="binding site" evidence="1">
    <location>
        <position position="27"/>
    </location>
    <ligand>
        <name>xanthine</name>
        <dbReference type="ChEBI" id="CHEBI:17712"/>
    </ligand>
</feature>
<feature type="binding site" evidence="1">
    <location>
        <begin position="127"/>
        <end position="131"/>
    </location>
    <ligand>
        <name>5-phospho-alpha-D-ribose 1-diphosphate</name>
        <dbReference type="ChEBI" id="CHEBI:58017"/>
    </ligand>
</feature>
<feature type="binding site" evidence="1">
    <location>
        <position position="155"/>
    </location>
    <ligand>
        <name>xanthine</name>
        <dbReference type="ChEBI" id="CHEBI:17712"/>
    </ligand>
</feature>